<feature type="chain" id="PRO_0000456849" description="Polypeptide N-acetylgalactosaminyltransferase 3">
    <location>
        <begin position="1"/>
        <end position="616"/>
    </location>
</feature>
<feature type="transmembrane region" description="Helical; Signal-anchor for type II membrane protein" evidence="4">
    <location>
        <begin position="13"/>
        <end position="33"/>
    </location>
</feature>
<feature type="domain" description="Ricin B-type lectin" evidence="5">
    <location>
        <begin position="512"/>
        <end position="616"/>
    </location>
</feature>
<feature type="region of interest" description="Catalytic subdomain A">
    <location>
        <begin position="182"/>
        <end position="291"/>
    </location>
</feature>
<feature type="region of interest" description="Catalytic subdomain B">
    <location>
        <begin position="354"/>
        <end position="416"/>
    </location>
</feature>
<feature type="binding site" evidence="6 8 9">
    <location>
        <position position="275"/>
    </location>
    <ligand>
        <name>Mn(2+)</name>
        <dbReference type="ChEBI" id="CHEBI:29035"/>
    </ligand>
</feature>
<feature type="binding site" evidence="6 8 9">
    <location>
        <position position="277"/>
    </location>
    <ligand>
        <name>Mn(2+)</name>
        <dbReference type="ChEBI" id="CHEBI:29035"/>
    </ligand>
</feature>
<feature type="binding site" evidence="6 8 9">
    <location>
        <position position="413"/>
    </location>
    <ligand>
        <name>Mn(2+)</name>
        <dbReference type="ChEBI" id="CHEBI:29035"/>
    </ligand>
</feature>
<feature type="binding site" evidence="6 8 9">
    <location>
        <position position="517"/>
    </location>
    <ligand>
        <name>UDP-N-acetyl-alpha-D-galactosamine</name>
        <dbReference type="ChEBI" id="CHEBI:67138"/>
    </ligand>
</feature>
<feature type="binding site" evidence="6 8 9">
    <location>
        <position position="520"/>
    </location>
    <ligand>
        <name>UDP-N-acetyl-alpha-D-galactosamine</name>
        <dbReference type="ChEBI" id="CHEBI:67138"/>
    </ligand>
</feature>
<feature type="binding site" evidence="6 8 9">
    <location>
        <position position="534"/>
    </location>
    <ligand>
        <name>UDP-N-acetyl-alpha-D-galactosamine</name>
        <dbReference type="ChEBI" id="CHEBI:67138"/>
    </ligand>
</feature>
<feature type="binding site" evidence="6 8 9">
    <location>
        <position position="539"/>
    </location>
    <ligand>
        <name>UDP-N-acetyl-alpha-D-galactosamine</name>
        <dbReference type="ChEBI" id="CHEBI:67138"/>
    </ligand>
</feature>
<feature type="glycosylation site" description="N-linked (GlcNAc...) asparagine" evidence="4">
    <location>
        <position position="482"/>
    </location>
</feature>
<feature type="disulfide bond" evidence="5">
    <location>
        <begin position="515"/>
        <end position="533"/>
    </location>
</feature>
<feature type="disulfide bond" evidence="5">
    <location>
        <begin position="588"/>
        <end position="601"/>
    </location>
</feature>
<feature type="strand" evidence="10">
    <location>
        <begin position="97"/>
        <end position="99"/>
    </location>
</feature>
<feature type="turn" evidence="10">
    <location>
        <begin position="102"/>
        <end position="105"/>
    </location>
</feature>
<feature type="strand" evidence="10">
    <location>
        <begin position="107"/>
        <end position="109"/>
    </location>
</feature>
<feature type="helix" evidence="10">
    <location>
        <begin position="121"/>
        <end position="123"/>
    </location>
</feature>
<feature type="helix" evidence="10">
    <location>
        <begin position="133"/>
        <end position="146"/>
    </location>
</feature>
<feature type="helix" evidence="10">
    <location>
        <begin position="150"/>
        <end position="153"/>
    </location>
</feature>
<feature type="helix" evidence="10">
    <location>
        <begin position="169"/>
        <end position="172"/>
    </location>
</feature>
<feature type="strand" evidence="10">
    <location>
        <begin position="177"/>
        <end position="180"/>
    </location>
</feature>
<feature type="strand" evidence="10">
    <location>
        <begin position="185"/>
        <end position="193"/>
    </location>
</feature>
<feature type="helix" evidence="10">
    <location>
        <begin position="196"/>
        <end position="209"/>
    </location>
</feature>
<feature type="turn" evidence="10">
    <location>
        <begin position="212"/>
        <end position="214"/>
    </location>
</feature>
<feature type="strand" evidence="10">
    <location>
        <begin position="215"/>
        <end position="224"/>
    </location>
</feature>
<feature type="helix" evidence="10">
    <location>
        <begin position="228"/>
        <end position="230"/>
    </location>
</feature>
<feature type="helix" evidence="10">
    <location>
        <begin position="232"/>
        <end position="239"/>
    </location>
</feature>
<feature type="strand" evidence="10">
    <location>
        <begin position="242"/>
        <end position="251"/>
    </location>
</feature>
<feature type="helix" evidence="10">
    <location>
        <begin position="255"/>
        <end position="265"/>
    </location>
</feature>
<feature type="strand" evidence="10">
    <location>
        <begin position="268"/>
        <end position="274"/>
    </location>
</feature>
<feature type="strand" evidence="10">
    <location>
        <begin position="276"/>
        <end position="280"/>
    </location>
</feature>
<feature type="helix" evidence="10">
    <location>
        <begin position="285"/>
        <end position="294"/>
    </location>
</feature>
<feature type="strand" evidence="10">
    <location>
        <begin position="298"/>
        <end position="307"/>
    </location>
</feature>
<feature type="turn" evidence="10">
    <location>
        <begin position="309"/>
        <end position="311"/>
    </location>
</feature>
<feature type="strand" evidence="10">
    <location>
        <begin position="325"/>
        <end position="329"/>
    </location>
</feature>
<feature type="strand" evidence="10">
    <location>
        <begin position="335"/>
        <end position="339"/>
    </location>
</feature>
<feature type="helix" evidence="10">
    <location>
        <begin position="342"/>
        <end position="347"/>
    </location>
</feature>
<feature type="strand" evidence="10">
    <location>
        <begin position="362"/>
        <end position="368"/>
    </location>
</feature>
<feature type="helix" evidence="10">
    <location>
        <begin position="369"/>
        <end position="374"/>
    </location>
</feature>
<feature type="strand" evidence="10">
    <location>
        <begin position="384"/>
        <end position="387"/>
    </location>
</feature>
<feature type="helix" evidence="10">
    <location>
        <begin position="388"/>
        <end position="398"/>
    </location>
</feature>
<feature type="strand" evidence="10">
    <location>
        <begin position="402"/>
        <end position="414"/>
    </location>
</feature>
<feature type="helix" evidence="10">
    <location>
        <begin position="427"/>
        <end position="441"/>
    </location>
</feature>
<feature type="helix" evidence="10">
    <location>
        <begin position="443"/>
        <end position="445"/>
    </location>
</feature>
<feature type="helix" evidence="10">
    <location>
        <begin position="446"/>
        <end position="452"/>
    </location>
</feature>
<feature type="helix" evidence="10">
    <location>
        <begin position="454"/>
        <end position="461"/>
    </location>
</feature>
<feature type="helix" evidence="10">
    <location>
        <begin position="469"/>
        <end position="477"/>
    </location>
</feature>
<feature type="helix" evidence="10">
    <location>
        <begin position="483"/>
        <end position="489"/>
    </location>
</feature>
<feature type="strand" evidence="10">
    <location>
        <begin position="502"/>
        <end position="509"/>
    </location>
</feature>
<feature type="turn" evidence="10">
    <location>
        <begin position="510"/>
        <end position="512"/>
    </location>
</feature>
<feature type="strand" evidence="10">
    <location>
        <begin position="515"/>
        <end position="517"/>
    </location>
</feature>
<feature type="strand" evidence="10">
    <location>
        <begin position="523"/>
        <end position="527"/>
    </location>
</feature>
<feature type="strand" evidence="10">
    <location>
        <begin position="529"/>
        <end position="531"/>
    </location>
</feature>
<feature type="strand" evidence="10">
    <location>
        <begin position="535"/>
        <end position="537"/>
    </location>
</feature>
<feature type="helix" evidence="10">
    <location>
        <begin position="538"/>
        <end position="540"/>
    </location>
</feature>
<feature type="strand" evidence="10">
    <location>
        <begin position="543"/>
        <end position="546"/>
    </location>
</feature>
<feature type="strand" evidence="10">
    <location>
        <begin position="549"/>
        <end position="551"/>
    </location>
</feature>
<feature type="strand" evidence="10">
    <location>
        <begin position="553"/>
        <end position="556"/>
    </location>
</feature>
<feature type="strand" evidence="10">
    <location>
        <begin position="561"/>
        <end position="563"/>
    </location>
</feature>
<feature type="helix" evidence="10">
    <location>
        <begin position="568"/>
        <end position="570"/>
    </location>
</feature>
<feature type="strand" evidence="10">
    <location>
        <begin position="572"/>
        <end position="574"/>
    </location>
</feature>
<feature type="strand" evidence="10">
    <location>
        <begin position="580"/>
        <end position="582"/>
    </location>
</feature>
<feature type="turn" evidence="10">
    <location>
        <begin position="583"/>
        <end position="586"/>
    </location>
</feature>
<feature type="strand" evidence="10">
    <location>
        <begin position="587"/>
        <end position="590"/>
    </location>
</feature>
<feature type="strand" evidence="10">
    <location>
        <begin position="593"/>
        <end position="595"/>
    </location>
</feature>
<feature type="strand" evidence="10">
    <location>
        <begin position="597"/>
        <end position="599"/>
    </location>
</feature>
<feature type="helix" evidence="10">
    <location>
        <begin position="606"/>
        <end position="608"/>
    </location>
</feature>
<feature type="strand" evidence="10">
    <location>
        <begin position="610"/>
        <end position="613"/>
    </location>
</feature>
<organism>
    <name type="scientific">Taeniopygia guttata</name>
    <name type="common">Zebra finch</name>
    <name type="synonym">Poephila guttata</name>
    <dbReference type="NCBI Taxonomy" id="59729"/>
    <lineage>
        <taxon>Eukaryota</taxon>
        <taxon>Metazoa</taxon>
        <taxon>Chordata</taxon>
        <taxon>Craniata</taxon>
        <taxon>Vertebrata</taxon>
        <taxon>Euteleostomi</taxon>
        <taxon>Archelosauria</taxon>
        <taxon>Archosauria</taxon>
        <taxon>Dinosauria</taxon>
        <taxon>Saurischia</taxon>
        <taxon>Theropoda</taxon>
        <taxon>Coelurosauria</taxon>
        <taxon>Aves</taxon>
        <taxon>Neognathae</taxon>
        <taxon>Neoaves</taxon>
        <taxon>Telluraves</taxon>
        <taxon>Australaves</taxon>
        <taxon>Passeriformes</taxon>
        <taxon>Passeroidea</taxon>
        <taxon>Estrildidae</taxon>
        <taxon>Estrildinae</taxon>
        <taxon>Taeniopygia</taxon>
    </lineage>
</organism>
<reference key="1">
    <citation type="journal article" date="2010" name="Nature">
        <title>The genome of a songbird.</title>
        <authorList>
            <person name="Warren W.C."/>
            <person name="Clayton D.F."/>
            <person name="Ellegren H."/>
            <person name="Arnold A.P."/>
            <person name="Hillier L.W."/>
            <person name="Kunstner A."/>
            <person name="Searle S."/>
            <person name="White S."/>
            <person name="Vilella A.J."/>
            <person name="Fairley S."/>
            <person name="Heger A."/>
            <person name="Kong L."/>
            <person name="Ponting C.P."/>
            <person name="Jarvis E.D."/>
            <person name="Mello C.V."/>
            <person name="Minx P."/>
            <person name="Lovell P."/>
            <person name="Velho T.A."/>
            <person name="Ferris M."/>
            <person name="Balakrishnan C.N."/>
            <person name="Sinha S."/>
            <person name="Blatti C."/>
            <person name="London S.E."/>
            <person name="Li Y."/>
            <person name="Lin Y.C."/>
            <person name="George J."/>
            <person name="Sweedler J."/>
            <person name="Southey B."/>
            <person name="Gunaratne P."/>
            <person name="Watson M."/>
            <person name="Nam K."/>
            <person name="Backstrom N."/>
            <person name="Smeds L."/>
            <person name="Nabholz B."/>
            <person name="Itoh Y."/>
            <person name="Whitney O."/>
            <person name="Pfenning A.R."/>
            <person name="Howard J."/>
            <person name="Volker M."/>
            <person name="Skinner B.M."/>
            <person name="Griffin D.K."/>
            <person name="Ye L."/>
            <person name="McLaren W.M."/>
            <person name="Flicek P."/>
            <person name="Quesada V."/>
            <person name="Velasco G."/>
            <person name="Lopez-Otin C."/>
            <person name="Puente X.S."/>
            <person name="Olender T."/>
            <person name="Lancet D."/>
            <person name="Smit A.F."/>
            <person name="Hubley R."/>
            <person name="Konkel M.K."/>
            <person name="Walker J.A."/>
            <person name="Batzer M.A."/>
            <person name="Gu W."/>
            <person name="Pollock D.D."/>
            <person name="Chen L."/>
            <person name="Cheng Z."/>
            <person name="Eichler E.E."/>
            <person name="Stapley J."/>
            <person name="Slate J."/>
            <person name="Ekblom R."/>
            <person name="Birkhead T."/>
            <person name="Burke T."/>
            <person name="Burt D."/>
            <person name="Scharff C."/>
            <person name="Adam I."/>
            <person name="Richard H."/>
            <person name="Sultan M."/>
            <person name="Soldatov A."/>
            <person name="Lehrach H."/>
            <person name="Edwards S.V."/>
            <person name="Yang S.P."/>
            <person name="Li X."/>
            <person name="Graves T."/>
            <person name="Fulton L."/>
            <person name="Nelson J."/>
            <person name="Chinwalla A."/>
            <person name="Hou S."/>
            <person name="Mardis E.R."/>
            <person name="Wilson R.K."/>
        </authorList>
    </citation>
    <scope>NUCLEOTIDE SEQUENCE [LARGE SCALE GENOMIC DNA]</scope>
</reference>
<reference evidence="8 9" key="2">
    <citation type="journal article" date="2020" name="Nat. Chem. Biol.">
        <title>Molecular basis for fibroblast growth factor 23 O-glycosylation by GalNAc-T3.</title>
        <authorList>
            <person name="de Las Rivas M."/>
            <person name="Paul Daniel E.J."/>
            <person name="Narimatsu Y."/>
            <person name="Companon I."/>
            <person name="Kato K."/>
            <person name="Hermosilla P."/>
            <person name="Thureau A."/>
            <person name="Ceballos-Laita L."/>
            <person name="Coelho H."/>
            <person name="Bernado P."/>
            <person name="Marcelo F."/>
            <person name="Hansen L."/>
            <person name="Maeda R."/>
            <person name="Lostao A."/>
            <person name="Corzana F."/>
            <person name="Clausen H."/>
            <person name="Gerken T.A."/>
            <person name="Hurtado-Guerrero R."/>
        </authorList>
    </citation>
    <scope>X-RAY CRYSTALLOGRAPHY (1.96 ANGSTROMS) IN COMPLEX WITH UDP</scope>
    <scope>MANGANESE AND FGF23C</scope>
    <scope>FUNCTION</scope>
    <scope>CATALYTIC ACTIVITY</scope>
    <scope>COFACTOR</scope>
    <scope>BIOPHYSICOCHEMICAL PROPERTIES</scope>
    <scope>MANGANESE-BINDING</scope>
    <scope>UDP-N-ACETYL-ALPHA-D-GALACTOSAMINE-BINDING</scope>
</reference>
<sequence length="616" mass="70338">MALKKAPKLFKTFFHWKLWKFSIIVFVFLVFLFLLQREVGVQDFKDEAGIEPVVGKKSHVLGLVLNAMNNIKGAKPKMQIKAPIRQTKVPGERHCLPGHYTPVELKPFLDRPLQDPNAPGASGKAFKTINLNSEEQKEKQAGEEKHCFNAFASDRISLHRDLGPDTRPPECIEQKFKRCPPLPTTSIIIVFHNEAWSTLLRTVHSVMYTSPAILLKEIILVDDASVDEYLHDKLDEYVKQFQIVKVVRQKERKGLITARLLGASVATGETLTFLDAHCECFYGWLEPLLARIAENPVAVVSPDIASIDLNTFEFSKPSPYGHSHNRGNFDWSLSFGWESLPKHENKRRKDETYPIRTPTFAGGLFSISKDYFEYIGSYDEEMEIWGGENIEMSFRVWQCGGQLEIMPCSVVGHVFRSKSPHTFPKGTQVITRNQVRLAEVWMDEYKEIFYRRNTEAAKIVKQKTFGDISKRIDLRQRLQCKNFTWYLSNVYPEAYVPDLNPLFSGYLKNIGNRMCLDVGENNHGGKPLIMYSCHGLGGNQKELCLHASKGPVQLRECTYKGQKTFAVGEEQWLHQKDQTLYNEALHMCLTGNGEHPSLASCNPSDPFQKWIFGQND</sequence>
<keyword id="KW-0002">3D-structure</keyword>
<keyword id="KW-1015">Disulfide bond</keyword>
<keyword id="KW-0325">Glycoprotein</keyword>
<keyword id="KW-0328">Glycosyltransferase</keyword>
<keyword id="KW-0333">Golgi apparatus</keyword>
<keyword id="KW-0430">Lectin</keyword>
<keyword id="KW-0464">Manganese</keyword>
<keyword id="KW-0472">Membrane</keyword>
<keyword id="KW-0479">Metal-binding</keyword>
<keyword id="KW-1185">Reference proteome</keyword>
<keyword id="KW-0735">Signal-anchor</keyword>
<keyword id="KW-0808">Transferase</keyword>
<keyword id="KW-0812">Transmembrane</keyword>
<keyword id="KW-1133">Transmembrane helix</keyword>
<comment type="function">
    <text evidence="6">Catalyzes the initial reaction in O-linked oligosaccharide biosynthesis, the transfer of an N-acetyl-D-galactosamine residue to a serine or threonine residue on the protein receptor (PubMed:31932717). Glycosylates FGF23 (PubMed:31932717).</text>
</comment>
<comment type="catalytic activity">
    <reaction evidence="2">
        <text>L-seryl-[protein] + UDP-N-acetyl-alpha-D-galactosamine = a 3-O-[N-acetyl-alpha-D-galactosaminyl]-L-seryl-[protein] + UDP + H(+)</text>
        <dbReference type="Rhea" id="RHEA:23956"/>
        <dbReference type="Rhea" id="RHEA-COMP:9863"/>
        <dbReference type="Rhea" id="RHEA-COMP:12788"/>
        <dbReference type="ChEBI" id="CHEBI:15378"/>
        <dbReference type="ChEBI" id="CHEBI:29999"/>
        <dbReference type="ChEBI" id="CHEBI:53604"/>
        <dbReference type="ChEBI" id="CHEBI:58223"/>
        <dbReference type="ChEBI" id="CHEBI:67138"/>
        <dbReference type="EC" id="2.4.1.41"/>
    </reaction>
</comment>
<comment type="catalytic activity">
    <reaction evidence="6">
        <text>L-threonyl-[protein] + UDP-N-acetyl-alpha-D-galactosamine = a 3-O-[N-acetyl-alpha-D-galactosaminyl]-L-threonyl-[protein] + UDP + H(+)</text>
        <dbReference type="Rhea" id="RHEA:52424"/>
        <dbReference type="Rhea" id="RHEA-COMP:11060"/>
        <dbReference type="Rhea" id="RHEA-COMP:11689"/>
        <dbReference type="ChEBI" id="CHEBI:15378"/>
        <dbReference type="ChEBI" id="CHEBI:30013"/>
        <dbReference type="ChEBI" id="CHEBI:58223"/>
        <dbReference type="ChEBI" id="CHEBI:67138"/>
        <dbReference type="ChEBI" id="CHEBI:87075"/>
        <dbReference type="EC" id="2.4.1.41"/>
    </reaction>
</comment>
<comment type="cofactor">
    <cofactor evidence="6">
        <name>Mn(2+)</name>
        <dbReference type="ChEBI" id="CHEBI:29035"/>
    </cofactor>
</comment>
<comment type="biophysicochemical properties">
    <kinetics>
        <KM evidence="6">170 uM for FGF23 NAPIPRRHTRSAEDDS peptide</KM>
    </kinetics>
</comment>
<comment type="pathway">
    <text>Protein modification; protein glycosylation.</text>
</comment>
<comment type="subcellular location">
    <subcellularLocation>
        <location evidence="2">Golgi apparatus</location>
        <location evidence="2">Golgi stack membrane</location>
        <topology evidence="2">Single-pass type II membrane protein</topology>
    </subcellularLocation>
    <text evidence="2">Resides preferentially in the trans and medial parts of the Golgi stack.</text>
</comment>
<comment type="domain">
    <text evidence="1">There are two conserved domains in the glycosyltransferase region: the N-terminal domain (domain A, also called GT1 motif), which is probably involved in manganese coordination and substrate binding and the C-terminal domain (domain B, also called Gal/GalNAc-T motif), which is probably involved in catalytic reaction and UDP-Gal binding.</text>
</comment>
<comment type="domain">
    <text evidence="2 3">The ricin B-type lectin domain binds to GalNAc and contributes to the glycopeptide specificity (By similarity). Essential for glycosylation of FGF23 (By similarity).</text>
</comment>
<comment type="similarity">
    <text evidence="7">Belongs to the glycosyltransferase 2 family. GalNAc-T subfamily.</text>
</comment>
<accession>H0ZAB5</accession>
<gene>
    <name type="primary">GALNT3</name>
</gene>
<protein>
    <recommendedName>
        <fullName>Polypeptide N-acetylgalactosaminyltransferase 3</fullName>
        <ecNumber evidence="6">2.4.1.41</ecNumber>
    </recommendedName>
</protein>
<evidence type="ECO:0000250" key="1">
    <source>
        <dbReference type="UniProtKB" id="O08912"/>
    </source>
</evidence>
<evidence type="ECO:0000250" key="2">
    <source>
        <dbReference type="UniProtKB" id="Q14435"/>
    </source>
</evidence>
<evidence type="ECO:0000250" key="3">
    <source>
        <dbReference type="UniProtKB" id="Q8N4A0"/>
    </source>
</evidence>
<evidence type="ECO:0000255" key="4"/>
<evidence type="ECO:0000255" key="5">
    <source>
        <dbReference type="PROSITE-ProRule" id="PRU00174"/>
    </source>
</evidence>
<evidence type="ECO:0000269" key="6">
    <source>
    </source>
</evidence>
<evidence type="ECO:0000305" key="7"/>
<evidence type="ECO:0007744" key="8">
    <source>
        <dbReference type="PDB" id="6S22"/>
    </source>
</evidence>
<evidence type="ECO:0007744" key="9">
    <source>
        <dbReference type="PDB" id="6S24"/>
    </source>
</evidence>
<evidence type="ECO:0007829" key="10">
    <source>
        <dbReference type="PDB" id="6S22"/>
    </source>
</evidence>
<proteinExistence type="evidence at protein level"/>
<dbReference type="EC" id="2.4.1.41" evidence="6"/>
<dbReference type="EMBL" id="ABQF01010567">
    <property type="status" value="NOT_ANNOTATED_CDS"/>
    <property type="molecule type" value="Genomic_DNA"/>
</dbReference>
<dbReference type="PDB" id="6S22">
    <property type="method" value="X-ray"/>
    <property type="resolution" value="1.96 A"/>
    <property type="chains" value="A=1-616"/>
</dbReference>
<dbReference type="PDB" id="6S24">
    <property type="method" value="X-ray"/>
    <property type="resolution" value="2.12 A"/>
    <property type="chains" value="A=1-616"/>
</dbReference>
<dbReference type="PDBsum" id="6S22"/>
<dbReference type="PDBsum" id="6S24"/>
<dbReference type="SMR" id="H0ZAB5"/>
<dbReference type="STRING" id="59729.ENSTGUP00000024214"/>
<dbReference type="UniLectin" id="H0ZAB5"/>
<dbReference type="Ensembl" id="ENSTGUT00000007596.2">
    <property type="protein sequence ID" value="ENSTGUP00000007519.2"/>
    <property type="gene ID" value="ENSTGUG00000007273.2"/>
</dbReference>
<dbReference type="GeneTree" id="ENSGT00940000156609"/>
<dbReference type="HOGENOM" id="CLU_013477_0_3_1"/>
<dbReference type="TreeFam" id="TF313267"/>
<dbReference type="UniPathway" id="UPA00378"/>
<dbReference type="Proteomes" id="UP000007754">
    <property type="component" value="Chromosome 7"/>
</dbReference>
<dbReference type="GO" id="GO:0032580">
    <property type="term" value="C:Golgi cisterna membrane"/>
    <property type="evidence" value="ECO:0007669"/>
    <property type="project" value="UniProtKB-SubCell"/>
</dbReference>
<dbReference type="GO" id="GO:0030246">
    <property type="term" value="F:carbohydrate binding"/>
    <property type="evidence" value="ECO:0007669"/>
    <property type="project" value="UniProtKB-KW"/>
</dbReference>
<dbReference type="GO" id="GO:0030145">
    <property type="term" value="F:manganese ion binding"/>
    <property type="evidence" value="ECO:0000314"/>
    <property type="project" value="UniProtKB"/>
</dbReference>
<dbReference type="GO" id="GO:0004653">
    <property type="term" value="F:polypeptide N-acetylgalactosaminyltransferase activity"/>
    <property type="evidence" value="ECO:0000314"/>
    <property type="project" value="UniProtKB"/>
</dbReference>
<dbReference type="GO" id="GO:0018243">
    <property type="term" value="P:protein O-linked glycosylation via threonine"/>
    <property type="evidence" value="ECO:0000314"/>
    <property type="project" value="UniProtKB"/>
</dbReference>
<dbReference type="CDD" id="cd02510">
    <property type="entry name" value="pp-GalNAc-T"/>
    <property type="match status" value="1"/>
</dbReference>
<dbReference type="FunFam" id="3.90.550.10:FF:000039">
    <property type="entry name" value="Polypeptide N-acetylgalactosaminyltransferase"/>
    <property type="match status" value="1"/>
</dbReference>
<dbReference type="Gene3D" id="2.80.10.50">
    <property type="match status" value="1"/>
</dbReference>
<dbReference type="Gene3D" id="3.90.550.10">
    <property type="entry name" value="Spore Coat Polysaccharide Biosynthesis Protein SpsA, Chain A"/>
    <property type="match status" value="1"/>
</dbReference>
<dbReference type="InterPro" id="IPR045885">
    <property type="entry name" value="GalNAc-T"/>
</dbReference>
<dbReference type="InterPro" id="IPR001173">
    <property type="entry name" value="Glyco_trans_2-like"/>
</dbReference>
<dbReference type="InterPro" id="IPR029044">
    <property type="entry name" value="Nucleotide-diphossugar_trans"/>
</dbReference>
<dbReference type="InterPro" id="IPR035992">
    <property type="entry name" value="Ricin_B-like_lectins"/>
</dbReference>
<dbReference type="InterPro" id="IPR000772">
    <property type="entry name" value="Ricin_B_lectin"/>
</dbReference>
<dbReference type="PANTHER" id="PTHR11675">
    <property type="entry name" value="N-ACETYLGALACTOSAMINYLTRANSFERASE"/>
    <property type="match status" value="1"/>
</dbReference>
<dbReference type="PANTHER" id="PTHR11675:SF33">
    <property type="entry name" value="POLYPEPTIDE N-ACETYLGALACTOSAMINYLTRANSFERASE 3"/>
    <property type="match status" value="1"/>
</dbReference>
<dbReference type="Pfam" id="PF00535">
    <property type="entry name" value="Glycos_transf_2"/>
    <property type="match status" value="1"/>
</dbReference>
<dbReference type="Pfam" id="PF00652">
    <property type="entry name" value="Ricin_B_lectin"/>
    <property type="match status" value="1"/>
</dbReference>
<dbReference type="SMART" id="SM00458">
    <property type="entry name" value="RICIN"/>
    <property type="match status" value="1"/>
</dbReference>
<dbReference type="SUPFAM" id="SSF53448">
    <property type="entry name" value="Nucleotide-diphospho-sugar transferases"/>
    <property type="match status" value="1"/>
</dbReference>
<dbReference type="SUPFAM" id="SSF50370">
    <property type="entry name" value="Ricin B-like lectins"/>
    <property type="match status" value="1"/>
</dbReference>
<dbReference type="PROSITE" id="PS50231">
    <property type="entry name" value="RICIN_B_LECTIN"/>
    <property type="match status" value="1"/>
</dbReference>
<name>GALT3_TAEGU</name>